<accession>Q9S1N4</accession>
<proteinExistence type="inferred from homology"/>
<gene>
    <name evidence="1" type="primary">dnaG</name>
    <name type="ordered locus">SCO2468</name>
    <name type="ORF">SC7A8.07c</name>
</gene>
<evidence type="ECO:0000255" key="1">
    <source>
        <dbReference type="HAMAP-Rule" id="MF_00974"/>
    </source>
</evidence>
<evidence type="ECO:0000256" key="2">
    <source>
        <dbReference type="SAM" id="MobiDB-lite"/>
    </source>
</evidence>
<sequence>MAGRINDEDVKAVRDAVPIDAVVSEYLQLRNAGGGNLKGLCPFHDEKSPSFQVSPSKGFFHCFGCQEGGDTITFVMKIDHLTFSEAVERLAGQAGITLRYEEGGYNPSHQRGERIRLVEAHKIAAQWYAEQLATGPEADTGRAFLADRGFDQAAAEHFGVGYSPQGWDHLTRFLRGKGFSDKELLLSGLSQEGRRGPIDRFRGRLMWPIRDIGGDVVGFGARKLYEADNGPKYLNTPDTAIYKKSQVLYGIDLAKKDIAKASRAVVVEGYTDVMACHLAGVTTAIATCGTAFGGDHIKILRRLLMDNGSARVIFTFDGDAAGQKAALRAFEDDQKFAAETYIAIAPDGMDPCDLRLAKGDDAVADLVEPRTPLFEFALRQIVARYDLDTPAGRAAALDEAAPVVARIKNSGAQHEVAVQLAGMLGILDTQFVVKRIAQLARWARDRGGKGPAPDQRQRGGGPQQQAGPMTATPRGPALNLRNPVFATERELLKLALQRPELVSPAFDAYGVDEFTAPPYAAVREAIMEAGGAEFGVQDPQDYLVRVREAAPDDTVRAMVTELAVEAIMLHRGVKGVDEVYAGAQLVTVRRRAVERRIRDITGRLTRLSGHGDPAELAAVQNELWILQQYDQNLREHGAAAL</sequence>
<organism>
    <name type="scientific">Streptomyces coelicolor (strain ATCC BAA-471 / A3(2) / M145)</name>
    <dbReference type="NCBI Taxonomy" id="100226"/>
    <lineage>
        <taxon>Bacteria</taxon>
        <taxon>Bacillati</taxon>
        <taxon>Actinomycetota</taxon>
        <taxon>Actinomycetes</taxon>
        <taxon>Kitasatosporales</taxon>
        <taxon>Streptomycetaceae</taxon>
        <taxon>Streptomyces</taxon>
        <taxon>Streptomyces albidoflavus group</taxon>
    </lineage>
</organism>
<name>DNAG_STRCO</name>
<keyword id="KW-0235">DNA replication</keyword>
<keyword id="KW-0238">DNA-binding</keyword>
<keyword id="KW-0240">DNA-directed RNA polymerase</keyword>
<keyword id="KW-0460">Magnesium</keyword>
<keyword id="KW-0479">Metal-binding</keyword>
<keyword id="KW-0548">Nucleotidyltransferase</keyword>
<keyword id="KW-0639">Primosome</keyword>
<keyword id="KW-1185">Reference proteome</keyword>
<keyword id="KW-0804">Transcription</keyword>
<keyword id="KW-0808">Transferase</keyword>
<keyword id="KW-0862">Zinc</keyword>
<keyword id="KW-0863">Zinc-finger</keyword>
<comment type="function">
    <text evidence="1">RNA polymerase that catalyzes the synthesis of short RNA molecules used as primers for DNA polymerase during DNA replication.</text>
</comment>
<comment type="catalytic activity">
    <reaction evidence="1">
        <text>ssDNA + n NTP = ssDNA/pppN(pN)n-1 hybrid + (n-1) diphosphate.</text>
        <dbReference type="EC" id="2.7.7.101"/>
    </reaction>
</comment>
<comment type="cofactor">
    <cofactor evidence="1">
        <name>Zn(2+)</name>
        <dbReference type="ChEBI" id="CHEBI:29105"/>
    </cofactor>
    <text evidence="1">Binds 1 zinc ion per monomer.</text>
</comment>
<comment type="cofactor">
    <cofactor evidence="1">
        <name>Mg(2+)</name>
        <dbReference type="ChEBI" id="CHEBI:18420"/>
    </cofactor>
    <text evidence="1">Binds two Mg(2+) per subunit.</text>
</comment>
<comment type="subunit">
    <text evidence="1">Monomer. Interacts with DnaB.</text>
</comment>
<comment type="domain">
    <text evidence="1">Contains an N-terminal zinc-binding domain, a central core domain that contains the primase activity, and a C-terminal DnaB-binding domain.</text>
</comment>
<comment type="similarity">
    <text evidence="1">Belongs to the DnaG primase family.</text>
</comment>
<dbReference type="EC" id="2.7.7.101" evidence="1"/>
<dbReference type="EMBL" id="AJ244019">
    <property type="protein sequence ID" value="CAB51551.1"/>
    <property type="molecule type" value="Genomic_DNA"/>
</dbReference>
<dbReference type="EMBL" id="AL939112">
    <property type="protein sequence ID" value="CAB69756.1"/>
    <property type="molecule type" value="Genomic_DNA"/>
</dbReference>
<dbReference type="RefSeq" id="NP_626710.1">
    <property type="nucleotide sequence ID" value="NC_003888.3"/>
</dbReference>
<dbReference type="RefSeq" id="WP_003976336.1">
    <property type="nucleotide sequence ID" value="NZ_VNID01000001.1"/>
</dbReference>
<dbReference type="SMR" id="Q9S1N4"/>
<dbReference type="FunCoup" id="Q9S1N4">
    <property type="interactions" value="39"/>
</dbReference>
<dbReference type="STRING" id="100226.gene:17760070"/>
<dbReference type="PaxDb" id="100226-SCO2468"/>
<dbReference type="GeneID" id="91386536"/>
<dbReference type="KEGG" id="sco:SCO2468"/>
<dbReference type="PATRIC" id="fig|100226.15.peg.2509"/>
<dbReference type="eggNOG" id="COG0358">
    <property type="taxonomic scope" value="Bacteria"/>
</dbReference>
<dbReference type="HOGENOM" id="CLU_013501_3_1_11"/>
<dbReference type="InParanoid" id="Q9S1N4"/>
<dbReference type="OrthoDB" id="9803773at2"/>
<dbReference type="PhylomeDB" id="Q9S1N4"/>
<dbReference type="Proteomes" id="UP000001973">
    <property type="component" value="Chromosome"/>
</dbReference>
<dbReference type="GO" id="GO:0005737">
    <property type="term" value="C:cytoplasm"/>
    <property type="evidence" value="ECO:0000318"/>
    <property type="project" value="GO_Central"/>
</dbReference>
<dbReference type="GO" id="GO:0000428">
    <property type="term" value="C:DNA-directed RNA polymerase complex"/>
    <property type="evidence" value="ECO:0007669"/>
    <property type="project" value="UniProtKB-KW"/>
</dbReference>
<dbReference type="GO" id="GO:1990077">
    <property type="term" value="C:primosome complex"/>
    <property type="evidence" value="ECO:0007669"/>
    <property type="project" value="UniProtKB-KW"/>
</dbReference>
<dbReference type="GO" id="GO:0003677">
    <property type="term" value="F:DNA binding"/>
    <property type="evidence" value="ECO:0007669"/>
    <property type="project" value="UniProtKB-KW"/>
</dbReference>
<dbReference type="GO" id="GO:0003899">
    <property type="term" value="F:DNA-directed RNA polymerase activity"/>
    <property type="evidence" value="ECO:0007669"/>
    <property type="project" value="InterPro"/>
</dbReference>
<dbReference type="GO" id="GO:0008270">
    <property type="term" value="F:zinc ion binding"/>
    <property type="evidence" value="ECO:0007669"/>
    <property type="project" value="UniProtKB-UniRule"/>
</dbReference>
<dbReference type="GO" id="GO:0006269">
    <property type="term" value="P:DNA replication, synthesis of primer"/>
    <property type="evidence" value="ECO:0000318"/>
    <property type="project" value="GO_Central"/>
</dbReference>
<dbReference type="CDD" id="cd03364">
    <property type="entry name" value="TOPRIM_DnaG_primases"/>
    <property type="match status" value="1"/>
</dbReference>
<dbReference type="FunFam" id="3.40.1360.10:FF:000004">
    <property type="entry name" value="DNA primase"/>
    <property type="match status" value="1"/>
</dbReference>
<dbReference type="FunFam" id="3.90.580.10:FF:000001">
    <property type="entry name" value="DNA primase"/>
    <property type="match status" value="1"/>
</dbReference>
<dbReference type="FunFam" id="3.90.980.10:FF:000001">
    <property type="entry name" value="DNA primase"/>
    <property type="match status" value="1"/>
</dbReference>
<dbReference type="Gene3D" id="3.40.1360.10">
    <property type="match status" value="1"/>
</dbReference>
<dbReference type="Gene3D" id="3.90.980.10">
    <property type="entry name" value="DNA primase, catalytic core, N-terminal domain"/>
    <property type="match status" value="1"/>
</dbReference>
<dbReference type="Gene3D" id="3.90.580.10">
    <property type="entry name" value="Zinc finger, CHC2-type domain"/>
    <property type="match status" value="1"/>
</dbReference>
<dbReference type="HAMAP" id="MF_00974">
    <property type="entry name" value="DNA_primase_DnaG"/>
    <property type="match status" value="1"/>
</dbReference>
<dbReference type="InterPro" id="IPR037068">
    <property type="entry name" value="DNA_primase_core_N_sf"/>
</dbReference>
<dbReference type="InterPro" id="IPR019475">
    <property type="entry name" value="DNA_primase_DnaB-bd"/>
</dbReference>
<dbReference type="InterPro" id="IPR006295">
    <property type="entry name" value="DNA_primase_DnaG"/>
</dbReference>
<dbReference type="InterPro" id="IPR013173">
    <property type="entry name" value="DNA_primase_DnaG_DnaB-bd_dom"/>
</dbReference>
<dbReference type="InterPro" id="IPR036977">
    <property type="entry name" value="DNA_primase_Znf_CHC2"/>
</dbReference>
<dbReference type="InterPro" id="IPR030846">
    <property type="entry name" value="DnaG_bac"/>
</dbReference>
<dbReference type="InterPro" id="IPR013264">
    <property type="entry name" value="DNAG_N"/>
</dbReference>
<dbReference type="InterPro" id="IPR050219">
    <property type="entry name" value="DnaG_primase"/>
</dbReference>
<dbReference type="InterPro" id="IPR034151">
    <property type="entry name" value="TOPRIM_DnaG_bac"/>
</dbReference>
<dbReference type="InterPro" id="IPR006171">
    <property type="entry name" value="TOPRIM_dom"/>
</dbReference>
<dbReference type="InterPro" id="IPR002694">
    <property type="entry name" value="Znf_CHC2"/>
</dbReference>
<dbReference type="NCBIfam" id="TIGR01391">
    <property type="entry name" value="dnaG"/>
    <property type="match status" value="1"/>
</dbReference>
<dbReference type="PANTHER" id="PTHR30313">
    <property type="entry name" value="DNA PRIMASE"/>
    <property type="match status" value="1"/>
</dbReference>
<dbReference type="PANTHER" id="PTHR30313:SF2">
    <property type="entry name" value="DNA PRIMASE"/>
    <property type="match status" value="1"/>
</dbReference>
<dbReference type="Pfam" id="PF10410">
    <property type="entry name" value="DnaB_bind"/>
    <property type="match status" value="1"/>
</dbReference>
<dbReference type="Pfam" id="PF08278">
    <property type="entry name" value="DnaG_DnaB_bind"/>
    <property type="match status" value="1"/>
</dbReference>
<dbReference type="Pfam" id="PF08275">
    <property type="entry name" value="DNAG_N"/>
    <property type="match status" value="1"/>
</dbReference>
<dbReference type="Pfam" id="PF13662">
    <property type="entry name" value="Toprim_4"/>
    <property type="match status" value="1"/>
</dbReference>
<dbReference type="Pfam" id="PF01807">
    <property type="entry name" value="Zn_ribbon_DnaG"/>
    <property type="match status" value="1"/>
</dbReference>
<dbReference type="PIRSF" id="PIRSF002811">
    <property type="entry name" value="DnaG"/>
    <property type="match status" value="1"/>
</dbReference>
<dbReference type="SMART" id="SM00766">
    <property type="entry name" value="DnaG_DnaB_bind"/>
    <property type="match status" value="1"/>
</dbReference>
<dbReference type="SMART" id="SM00493">
    <property type="entry name" value="TOPRIM"/>
    <property type="match status" value="1"/>
</dbReference>
<dbReference type="SMART" id="SM00400">
    <property type="entry name" value="ZnF_CHCC"/>
    <property type="match status" value="1"/>
</dbReference>
<dbReference type="SUPFAM" id="SSF56731">
    <property type="entry name" value="DNA primase core"/>
    <property type="match status" value="1"/>
</dbReference>
<dbReference type="SUPFAM" id="SSF57783">
    <property type="entry name" value="Zinc beta-ribbon"/>
    <property type="match status" value="1"/>
</dbReference>
<dbReference type="PROSITE" id="PS50880">
    <property type="entry name" value="TOPRIM"/>
    <property type="match status" value="1"/>
</dbReference>
<protein>
    <recommendedName>
        <fullName evidence="1">DNA primase</fullName>
        <ecNumber evidence="1">2.7.7.101</ecNumber>
    </recommendedName>
</protein>
<reference key="1">
    <citation type="submission" date="1999-07" db="EMBL/GenBank/DDBJ databases">
        <title>Characterisation of the essential dnaG locus of Streptomyces coelicolor A3(2).</title>
        <authorList>
            <person name="Flett F."/>
            <person name="Jungmann-Campello D.M."/>
            <person name="Smith C.P."/>
        </authorList>
    </citation>
    <scope>NUCLEOTIDE SEQUENCE [GENOMIC DNA]</scope>
    <source>
        <strain>A3(2) / MT1110</strain>
    </source>
</reference>
<reference key="2">
    <citation type="journal article" date="2002" name="Nature">
        <title>Complete genome sequence of the model actinomycete Streptomyces coelicolor A3(2).</title>
        <authorList>
            <person name="Bentley S.D."/>
            <person name="Chater K.F."/>
            <person name="Cerdeno-Tarraga A.-M."/>
            <person name="Challis G.L."/>
            <person name="Thomson N.R."/>
            <person name="James K.D."/>
            <person name="Harris D.E."/>
            <person name="Quail M.A."/>
            <person name="Kieser H."/>
            <person name="Harper D."/>
            <person name="Bateman A."/>
            <person name="Brown S."/>
            <person name="Chandra G."/>
            <person name="Chen C.W."/>
            <person name="Collins M."/>
            <person name="Cronin A."/>
            <person name="Fraser A."/>
            <person name="Goble A."/>
            <person name="Hidalgo J."/>
            <person name="Hornsby T."/>
            <person name="Howarth S."/>
            <person name="Huang C.-H."/>
            <person name="Kieser T."/>
            <person name="Larke L."/>
            <person name="Murphy L.D."/>
            <person name="Oliver K."/>
            <person name="O'Neil S."/>
            <person name="Rabbinowitsch E."/>
            <person name="Rajandream M.A."/>
            <person name="Rutherford K.M."/>
            <person name="Rutter S."/>
            <person name="Seeger K."/>
            <person name="Saunders D."/>
            <person name="Sharp S."/>
            <person name="Squares R."/>
            <person name="Squares S."/>
            <person name="Taylor K."/>
            <person name="Warren T."/>
            <person name="Wietzorrek A."/>
            <person name="Woodward J.R."/>
            <person name="Barrell B.G."/>
            <person name="Parkhill J."/>
            <person name="Hopwood D.A."/>
        </authorList>
    </citation>
    <scope>NUCLEOTIDE SEQUENCE [LARGE SCALE GENOMIC DNA]</scope>
    <source>
        <strain>ATCC BAA-471 / A3(2) / M145</strain>
    </source>
</reference>
<feature type="chain" id="PRO_0000180527" description="DNA primase">
    <location>
        <begin position="1"/>
        <end position="641"/>
    </location>
</feature>
<feature type="domain" description="Toprim" evidence="1">
    <location>
        <begin position="262"/>
        <end position="346"/>
    </location>
</feature>
<feature type="zinc finger region" description="CHC2-type" evidence="1">
    <location>
        <begin position="41"/>
        <end position="65"/>
    </location>
</feature>
<feature type="region of interest" description="Disordered" evidence="2">
    <location>
        <begin position="444"/>
        <end position="478"/>
    </location>
</feature>
<feature type="binding site" evidence="1">
    <location>
        <position position="268"/>
    </location>
    <ligand>
        <name>Mg(2+)</name>
        <dbReference type="ChEBI" id="CHEBI:18420"/>
        <label>1</label>
        <note>catalytic</note>
    </ligand>
</feature>
<feature type="binding site" evidence="1">
    <location>
        <position position="317"/>
    </location>
    <ligand>
        <name>Mg(2+)</name>
        <dbReference type="ChEBI" id="CHEBI:18420"/>
        <label>1</label>
        <note>catalytic</note>
    </ligand>
</feature>
<feature type="binding site" evidence="1">
    <location>
        <position position="317"/>
    </location>
    <ligand>
        <name>Mg(2+)</name>
        <dbReference type="ChEBI" id="CHEBI:18420"/>
        <label>2</label>
    </ligand>
</feature>
<feature type="binding site" evidence="1">
    <location>
        <position position="319"/>
    </location>
    <ligand>
        <name>Mg(2+)</name>
        <dbReference type="ChEBI" id="CHEBI:18420"/>
        <label>2</label>
    </ligand>
</feature>